<accession>E3H9T2</accession>
<gene>
    <name type="primary">mrnCL</name>
    <name type="ordered locus">Ilyop_1840</name>
</gene>
<comment type="function">
    <text>Might be a ribonuclease involved in RNA processing.</text>
</comment>
<comment type="similarity">
    <text evidence="2">Belongs to the MrnC RNase family.</text>
</comment>
<comment type="caution">
    <text evidence="2">Strongly resembles the MrnC Mini-3 enzyme, but is missing a highly conserved, possibly catalytically important site at position 72.</text>
</comment>
<protein>
    <recommendedName>
        <fullName>Mini-ribonuclease 3-like protein</fullName>
    </recommendedName>
</protein>
<feature type="chain" id="PRO_0000415999" description="Mini-ribonuclease 3-like protein">
    <location>
        <begin position="1"/>
        <end position="127"/>
    </location>
</feature>
<feature type="active site" evidence="1">
    <location>
        <position position="19"/>
    </location>
</feature>
<proteinExistence type="inferred from homology"/>
<reference key="1">
    <citation type="journal article" date="2010" name="Stand. Genomic Sci.">
        <title>Complete genome sequence of Ilyobacter polytropus type strain (CuHbu1).</title>
        <authorList>
            <person name="Sikorski J."/>
            <person name="Chertkov O."/>
            <person name="Lapidus A."/>
            <person name="Nolan M."/>
            <person name="Lucas S."/>
            <person name="Del Rio T.G."/>
            <person name="Tice H."/>
            <person name="Cheng J.F."/>
            <person name="Tapia R."/>
            <person name="Han C."/>
            <person name="Goodwin L."/>
            <person name="Pitluck S."/>
            <person name="Liolios K."/>
            <person name="Ivanova N."/>
            <person name="Mavromatis K."/>
            <person name="Mikhailova N."/>
            <person name="Pati A."/>
            <person name="Chen A."/>
            <person name="Palaniappan K."/>
            <person name="Land M."/>
            <person name="Hauser L."/>
            <person name="Chang Y.J."/>
            <person name="Jeffries C.D."/>
            <person name="Brambilla E."/>
            <person name="Yasawong M."/>
            <person name="Rohde M."/>
            <person name="Pukall R."/>
            <person name="Spring S."/>
            <person name="Goker M."/>
            <person name="Woyke T."/>
            <person name="Bristow J."/>
            <person name="Eisen J.A."/>
            <person name="Markowitz V."/>
            <person name="Hugenholtz P."/>
            <person name="Kyrpides N.C."/>
            <person name="Klenk H.P."/>
        </authorList>
    </citation>
    <scope>NUCLEOTIDE SEQUENCE [LARGE SCALE GENOMIC DNA]</scope>
    <source>
        <strain>ATCC 51220 / DSM 2926 / LMG 16218 / CuHBu1</strain>
    </source>
</reference>
<sequence>MVNIDLKDAGGLPLAYLGDAVWELTVREYFVEKGYKINTMNKKVKKLVNAKAQSVIFKSILEDLDEDYKAVARRAKNSNIKSFPRSCSIMEYREATAFEALIAAFYINGETCRIKKILENHISEGEK</sequence>
<organism>
    <name type="scientific">Ilyobacter polytropus (strain ATCC 51220 / DSM 2926 / LMG 16218 / CuHBu1)</name>
    <dbReference type="NCBI Taxonomy" id="572544"/>
    <lineage>
        <taxon>Bacteria</taxon>
        <taxon>Fusobacteriati</taxon>
        <taxon>Fusobacteriota</taxon>
        <taxon>Fusobacteriia</taxon>
        <taxon>Fusobacteriales</taxon>
        <taxon>Fusobacteriaceae</taxon>
        <taxon>Ilyobacter</taxon>
    </lineage>
</organism>
<dbReference type="EMBL" id="CP002281">
    <property type="protein sequence ID" value="ADO83611.1"/>
    <property type="molecule type" value="Genomic_DNA"/>
</dbReference>
<dbReference type="RefSeq" id="WP_013388273.1">
    <property type="nucleotide sequence ID" value="NC_014632.1"/>
</dbReference>
<dbReference type="SMR" id="E3H9T2"/>
<dbReference type="STRING" id="572544.Ilyop_1840"/>
<dbReference type="KEGG" id="ipo:Ilyop_1840"/>
<dbReference type="eggNOG" id="COG1939">
    <property type="taxonomic scope" value="Bacteria"/>
</dbReference>
<dbReference type="HOGENOM" id="CLU_091169_2_1_0"/>
<dbReference type="OrthoDB" id="46571at2"/>
<dbReference type="Proteomes" id="UP000006875">
    <property type="component" value="Chromosome"/>
</dbReference>
<dbReference type="GO" id="GO:0005737">
    <property type="term" value="C:cytoplasm"/>
    <property type="evidence" value="ECO:0007669"/>
    <property type="project" value="UniProtKB-UniRule"/>
</dbReference>
<dbReference type="GO" id="GO:0004525">
    <property type="term" value="F:ribonuclease III activity"/>
    <property type="evidence" value="ECO:0007669"/>
    <property type="project" value="InterPro"/>
</dbReference>
<dbReference type="GO" id="GO:0019843">
    <property type="term" value="F:rRNA binding"/>
    <property type="evidence" value="ECO:0007669"/>
    <property type="project" value="UniProtKB-UniRule"/>
</dbReference>
<dbReference type="GO" id="GO:0006364">
    <property type="term" value="P:rRNA processing"/>
    <property type="evidence" value="ECO:0007669"/>
    <property type="project" value="UniProtKB-UniRule"/>
</dbReference>
<dbReference type="Gene3D" id="1.10.1520.10">
    <property type="entry name" value="Ribonuclease III domain"/>
    <property type="match status" value="1"/>
</dbReference>
<dbReference type="HAMAP" id="MF_01468">
    <property type="entry name" value="RNase_Mini_III"/>
    <property type="match status" value="1"/>
</dbReference>
<dbReference type="InterPro" id="IPR008226">
    <property type="entry name" value="Mini3_fam"/>
</dbReference>
<dbReference type="InterPro" id="IPR000999">
    <property type="entry name" value="RNase_III_dom"/>
</dbReference>
<dbReference type="InterPro" id="IPR036389">
    <property type="entry name" value="RNase_III_sf"/>
</dbReference>
<dbReference type="PANTHER" id="PTHR34276">
    <property type="entry name" value="MINI-RIBONUCLEASE 3"/>
    <property type="match status" value="1"/>
</dbReference>
<dbReference type="PANTHER" id="PTHR34276:SF1">
    <property type="entry name" value="MINI-RIBONUCLEASE 3"/>
    <property type="match status" value="1"/>
</dbReference>
<dbReference type="Pfam" id="PF00636">
    <property type="entry name" value="Ribonuclease_3"/>
    <property type="match status" value="1"/>
</dbReference>
<dbReference type="PIRSF" id="PIRSF005520">
    <property type="entry name" value="UCP005520"/>
    <property type="match status" value="1"/>
</dbReference>
<dbReference type="SUPFAM" id="SSF69065">
    <property type="entry name" value="RNase III domain-like"/>
    <property type="match status" value="1"/>
</dbReference>
<keyword id="KW-0255">Endonuclease</keyword>
<keyword id="KW-0378">Hydrolase</keyword>
<keyword id="KW-0540">Nuclease</keyword>
<keyword id="KW-1185">Reference proteome</keyword>
<name>MRNCL_ILYPC</name>
<evidence type="ECO:0000255" key="1"/>
<evidence type="ECO:0000305" key="2"/>